<reference key="1">
    <citation type="journal article" date="1993" name="Plant Mol. Biol.">
        <title>Molecular characterization of four chitinase cDNAs obtained from Cladosporium fulvum-infected tomato.</title>
        <authorList>
            <person name="Danhash N."/>
            <person name="Wagemakers C.A.M."/>
            <person name="van Kan J.A.L."/>
            <person name="de Wit P.J.G.M."/>
        </authorList>
    </citation>
    <scope>NUCLEOTIDE SEQUENCE [MRNA]</scope>
    <scope>PROTEIN SEQUENCE OF 112-115; 182-188 AND 218-221</scope>
    <source>
        <strain>cv. Moneymaker</strain>
    </source>
</reference>
<feature type="signal peptide" evidence="1">
    <location>
        <begin position="1"/>
        <end position="16"/>
    </location>
</feature>
<feature type="chain" id="PRO_0000005300" description="Acidic 27 kDa endochitinase">
    <location>
        <begin position="17"/>
        <end position="247"/>
    </location>
</feature>
<feature type="active site" description="Proton donor" evidence="2">
    <location>
        <position position="84"/>
    </location>
</feature>
<feature type="disulfide bond" evidence="1">
    <location>
        <begin position="206"/>
        <end position="238"/>
    </location>
</feature>
<gene>
    <name type="primary">CHI17</name>
</gene>
<comment type="function">
    <text>Defense against chitin-containing fungal pathogens.</text>
</comment>
<comment type="catalytic activity">
    <reaction>
        <text>Random endo-hydrolysis of N-acetyl-beta-D-glucosaminide (1-&gt;4)-beta-linkages in chitin and chitodextrins.</text>
        <dbReference type="EC" id="3.2.1.14"/>
    </reaction>
</comment>
<comment type="subcellular location">
    <subcellularLocation>
        <location>Secreted</location>
        <location>Extracellular space</location>
    </subcellularLocation>
</comment>
<comment type="induction">
    <text>By fungal infection.</text>
</comment>
<comment type="similarity">
    <text evidence="3">Belongs to the glycosyl hydrolase 19 family. Chitinase class II subfamily.</text>
</comment>
<dbReference type="EC" id="3.2.1.14"/>
<dbReference type="EMBL" id="Z15139">
    <property type="protein sequence ID" value="CAA78844.1"/>
    <property type="molecule type" value="mRNA"/>
</dbReference>
<dbReference type="PIR" id="S37342">
    <property type="entry name" value="S37342"/>
</dbReference>
<dbReference type="RefSeq" id="NP_001234400.1">
    <property type="nucleotide sequence ID" value="NM_001247471.1"/>
</dbReference>
<dbReference type="SMR" id="Q05540"/>
<dbReference type="STRING" id="4081.Q05540"/>
<dbReference type="CAZy" id="GH19">
    <property type="family name" value="Glycoside Hydrolase Family 19"/>
</dbReference>
<dbReference type="PaxDb" id="4081-Solyc02g082930.2.1"/>
<dbReference type="EnsemblPlants" id="Solyc02g082930.3.1">
    <property type="protein sequence ID" value="Solyc02g082930.3.1"/>
    <property type="gene ID" value="Solyc02g082930.3"/>
</dbReference>
<dbReference type="GeneID" id="544147"/>
<dbReference type="Gramene" id="Solyc02g082930.3.1">
    <property type="protein sequence ID" value="Solyc02g082930.3.1"/>
    <property type="gene ID" value="Solyc02g082930.3"/>
</dbReference>
<dbReference type="KEGG" id="sly:544147"/>
<dbReference type="eggNOG" id="KOG4742">
    <property type="taxonomic scope" value="Eukaryota"/>
</dbReference>
<dbReference type="HOGENOM" id="CLU_045506_1_0_1"/>
<dbReference type="InParanoid" id="Q05540"/>
<dbReference type="OMA" id="GEQAYNK"/>
<dbReference type="OrthoDB" id="5985073at2759"/>
<dbReference type="PhylomeDB" id="Q05540"/>
<dbReference type="Proteomes" id="UP000004994">
    <property type="component" value="Chromosome 2"/>
</dbReference>
<dbReference type="GO" id="GO:0005576">
    <property type="term" value="C:extracellular region"/>
    <property type="evidence" value="ECO:0007669"/>
    <property type="project" value="UniProtKB-SubCell"/>
</dbReference>
<dbReference type="GO" id="GO:0004568">
    <property type="term" value="F:chitinase activity"/>
    <property type="evidence" value="ECO:0000318"/>
    <property type="project" value="GO_Central"/>
</dbReference>
<dbReference type="GO" id="GO:0008843">
    <property type="term" value="F:endochitinase activity"/>
    <property type="evidence" value="ECO:0007669"/>
    <property type="project" value="UniProtKB-EC"/>
</dbReference>
<dbReference type="GO" id="GO:0016998">
    <property type="term" value="P:cell wall macromolecule catabolic process"/>
    <property type="evidence" value="ECO:0007669"/>
    <property type="project" value="InterPro"/>
</dbReference>
<dbReference type="GO" id="GO:0006032">
    <property type="term" value="P:chitin catabolic process"/>
    <property type="evidence" value="ECO:0007669"/>
    <property type="project" value="UniProtKB-KW"/>
</dbReference>
<dbReference type="GO" id="GO:0050832">
    <property type="term" value="P:defense response to fungus"/>
    <property type="evidence" value="ECO:0000318"/>
    <property type="project" value="GO_Central"/>
</dbReference>
<dbReference type="GO" id="GO:0000272">
    <property type="term" value="P:polysaccharide catabolic process"/>
    <property type="evidence" value="ECO:0007669"/>
    <property type="project" value="UniProtKB-KW"/>
</dbReference>
<dbReference type="CDD" id="cd00325">
    <property type="entry name" value="chitinase_GH19"/>
    <property type="match status" value="1"/>
</dbReference>
<dbReference type="FunFam" id="3.30.20.10:FF:000002">
    <property type="entry name" value="Acidic endochitinase pcht28"/>
    <property type="match status" value="1"/>
</dbReference>
<dbReference type="Gene3D" id="1.10.530.10">
    <property type="match status" value="1"/>
</dbReference>
<dbReference type="Gene3D" id="3.30.20.10">
    <property type="entry name" value="Endochitinase, domain 2"/>
    <property type="match status" value="1"/>
</dbReference>
<dbReference type="InterPro" id="IPR016283">
    <property type="entry name" value="Glyco_hydro_19"/>
</dbReference>
<dbReference type="InterPro" id="IPR000726">
    <property type="entry name" value="Glyco_hydro_19_cat"/>
</dbReference>
<dbReference type="InterPro" id="IPR023346">
    <property type="entry name" value="Lysozyme-like_dom_sf"/>
</dbReference>
<dbReference type="PANTHER" id="PTHR22595:SF171">
    <property type="entry name" value="BASIC ENDOCHITINASE B"/>
    <property type="match status" value="1"/>
</dbReference>
<dbReference type="PANTHER" id="PTHR22595">
    <property type="entry name" value="CHITINASE-RELATED"/>
    <property type="match status" value="1"/>
</dbReference>
<dbReference type="Pfam" id="PF00182">
    <property type="entry name" value="Glyco_hydro_19"/>
    <property type="match status" value="1"/>
</dbReference>
<dbReference type="PIRSF" id="PIRSF001060">
    <property type="entry name" value="Endochitinase"/>
    <property type="match status" value="1"/>
</dbReference>
<dbReference type="SUPFAM" id="SSF53955">
    <property type="entry name" value="Lysozyme-like"/>
    <property type="match status" value="1"/>
</dbReference>
<dbReference type="PROSITE" id="PS00773">
    <property type="entry name" value="CHITINASE_19_1"/>
    <property type="match status" value="1"/>
</dbReference>
<dbReference type="PROSITE" id="PS00774">
    <property type="entry name" value="CHITINASE_19_2"/>
    <property type="match status" value="1"/>
</dbReference>
<keyword id="KW-0119">Carbohydrate metabolism</keyword>
<keyword id="KW-0146">Chitin degradation</keyword>
<keyword id="KW-0903">Direct protein sequencing</keyword>
<keyword id="KW-1015">Disulfide bond</keyword>
<keyword id="KW-0326">Glycosidase</keyword>
<keyword id="KW-0378">Hydrolase</keyword>
<keyword id="KW-0568">Pathogenesis-related protein</keyword>
<keyword id="KW-0611">Plant defense</keyword>
<keyword id="KW-0624">Polysaccharide degradation</keyword>
<keyword id="KW-1185">Reference proteome</keyword>
<keyword id="KW-0964">Secreted</keyword>
<keyword id="KW-0732">Signal</keyword>
<accession>Q05540</accession>
<organism>
    <name type="scientific">Solanum lycopersicum</name>
    <name type="common">Tomato</name>
    <name type="synonym">Lycopersicon esculentum</name>
    <dbReference type="NCBI Taxonomy" id="4081"/>
    <lineage>
        <taxon>Eukaryota</taxon>
        <taxon>Viridiplantae</taxon>
        <taxon>Streptophyta</taxon>
        <taxon>Embryophyta</taxon>
        <taxon>Tracheophyta</taxon>
        <taxon>Spermatophyta</taxon>
        <taxon>Magnoliopsida</taxon>
        <taxon>eudicotyledons</taxon>
        <taxon>Gunneridae</taxon>
        <taxon>Pentapetalae</taxon>
        <taxon>asterids</taxon>
        <taxon>lamiids</taxon>
        <taxon>Solanales</taxon>
        <taxon>Solanaceae</taxon>
        <taxon>Solanoideae</taxon>
        <taxon>Solaneae</taxon>
        <taxon>Solanum</taxon>
        <taxon>Solanum subgen. Lycopersicon</taxon>
    </lineage>
</organism>
<protein>
    <recommendedName>
        <fullName>Acidic 27 kDa endochitinase</fullName>
        <ecNumber>3.2.1.14</ecNumber>
    </recommendedName>
</protein>
<proteinExistence type="evidence at protein level"/>
<evidence type="ECO:0000250" key="1"/>
<evidence type="ECO:0000250" key="2">
    <source>
        <dbReference type="UniProtKB" id="P29022"/>
    </source>
</evidence>
<evidence type="ECO:0000305" key="3"/>
<name>CHIB_SOLLC</name>
<sequence length="247" mass="26584">MVLCCVFLLFLTGSFAQDVGTIVTSDLFNEMLKNRNDDRCPAKGFYTYDAFIAAANSFPGFGTTGDDTARKKEIAAFFGQTSHETTGGSLSADGPFAGGYCFVREGNQMGSGFYGRGPIQLTGQSNYDLAGQAIGQDLVNNPDLVATDATVSFKTAIWFWMTAQGNKPSCHDVITGQWTPSAADASANRQPGYGVITNIINGGIECGKGQNPQVEDRIGFYRRYCTILNVAPGDNLDCYDQRNFAEA</sequence>